<comment type="function">
    <text evidence="1">Possible metal-dependent hydrolase.</text>
</comment>
<comment type="cofactor">
    <cofactor evidence="1">
        <name>Zn(2+)</name>
        <dbReference type="ChEBI" id="CHEBI:29105"/>
    </cofactor>
    <text evidence="1">Binds 1 zinc ion per subunit.</text>
</comment>
<comment type="subunit">
    <text evidence="1">Homodimer.</text>
</comment>
<comment type="subcellular location">
    <subcellularLocation>
        <location evidence="1">Cytoplasm</location>
    </subcellularLocation>
</comment>
<comment type="similarity">
    <text evidence="1">Belongs to the metal hydrolase YfiT family.</text>
</comment>
<reference key="1">
    <citation type="journal article" date="2003" name="Nature">
        <title>Genome sequence of Bacillus cereus and comparative analysis with Bacillus anthracis.</title>
        <authorList>
            <person name="Ivanova N."/>
            <person name="Sorokin A."/>
            <person name="Anderson I."/>
            <person name="Galleron N."/>
            <person name="Candelon B."/>
            <person name="Kapatral V."/>
            <person name="Bhattacharyya A."/>
            <person name="Reznik G."/>
            <person name="Mikhailova N."/>
            <person name="Lapidus A."/>
            <person name="Chu L."/>
            <person name="Mazur M."/>
            <person name="Goltsman E."/>
            <person name="Larsen N."/>
            <person name="D'Souza M."/>
            <person name="Walunas T."/>
            <person name="Grechkin Y."/>
            <person name="Pusch G."/>
            <person name="Haselkorn R."/>
            <person name="Fonstein M."/>
            <person name="Ehrlich S.D."/>
            <person name="Overbeek R."/>
            <person name="Kyrpides N.C."/>
        </authorList>
    </citation>
    <scope>NUCLEOTIDE SEQUENCE [LARGE SCALE GENOMIC DNA]</scope>
    <source>
        <strain>ATCC 14579 / DSM 31 / CCUG 7414 / JCM 2152 / NBRC 15305 / NCIMB 9373 / NCTC 2599 / NRRL B-3711</strain>
    </source>
</reference>
<protein>
    <recommendedName>
        <fullName evidence="1">Putative metal-dependent hydrolase BC_2708</fullName>
        <ecNumber evidence="1">3.-.-.-</ecNumber>
    </recommendedName>
</protein>
<sequence>MNDLRYPIGQFTYKRPITEEMIDTWIQEIEDLPNELTKAIKDLDQKQLDTPYRVGGWTVRQVVHHVVDSHMNSYIRFKLALTEKNPTIKPYKEEKWAELPDSKLPVDVSLVMLDSLHKRWVNLLYSLEIEDLEKTFNHPETGETKLAVAIGLYAWHGRHHTAHITSLRKRLNW</sequence>
<name>Y2708_BACCR</name>
<dbReference type="EC" id="3.-.-.-" evidence="1"/>
<dbReference type="EMBL" id="AE016877">
    <property type="protein sequence ID" value="AAP09662.1"/>
    <property type="molecule type" value="Genomic_DNA"/>
</dbReference>
<dbReference type="RefSeq" id="NP_832461.1">
    <property type="nucleotide sequence ID" value="NC_004722.1"/>
</dbReference>
<dbReference type="RefSeq" id="WP_000999070.1">
    <property type="nucleotide sequence ID" value="NZ_CP138336.1"/>
</dbReference>
<dbReference type="SMR" id="Q813J0"/>
<dbReference type="STRING" id="226900.BC_2708"/>
<dbReference type="KEGG" id="bce:BC2708"/>
<dbReference type="PATRIC" id="fig|226900.8.peg.2759"/>
<dbReference type="HOGENOM" id="CLU_105789_1_0_9"/>
<dbReference type="OrthoDB" id="9796039at2"/>
<dbReference type="Proteomes" id="UP000001417">
    <property type="component" value="Chromosome"/>
</dbReference>
<dbReference type="GO" id="GO:0005737">
    <property type="term" value="C:cytoplasm"/>
    <property type="evidence" value="ECO:0007669"/>
    <property type="project" value="UniProtKB-SubCell"/>
</dbReference>
<dbReference type="GO" id="GO:0016787">
    <property type="term" value="F:hydrolase activity"/>
    <property type="evidence" value="ECO:0007669"/>
    <property type="project" value="UniProtKB-UniRule"/>
</dbReference>
<dbReference type="GO" id="GO:0008270">
    <property type="term" value="F:zinc ion binding"/>
    <property type="evidence" value="ECO:0007669"/>
    <property type="project" value="UniProtKB-UniRule"/>
</dbReference>
<dbReference type="Gene3D" id="1.20.120.450">
    <property type="entry name" value="dinb family like domain"/>
    <property type="match status" value="1"/>
</dbReference>
<dbReference type="HAMAP" id="MF_01256">
    <property type="entry name" value="YfiT_hydrol"/>
    <property type="match status" value="1"/>
</dbReference>
<dbReference type="InterPro" id="IPR024775">
    <property type="entry name" value="DinB-like"/>
</dbReference>
<dbReference type="InterPro" id="IPR034660">
    <property type="entry name" value="DinB/YfiT-like"/>
</dbReference>
<dbReference type="InterPro" id="IPR023774">
    <property type="entry name" value="Put_metal_dep_hydrolase_YfiT"/>
</dbReference>
<dbReference type="NCBIfam" id="NF009807">
    <property type="entry name" value="PRK13291.1"/>
    <property type="match status" value="1"/>
</dbReference>
<dbReference type="Pfam" id="PF12867">
    <property type="entry name" value="DinB_2"/>
    <property type="match status" value="1"/>
</dbReference>
<dbReference type="SUPFAM" id="SSF109854">
    <property type="entry name" value="DinB/YfiT-like putative metalloenzymes"/>
    <property type="match status" value="1"/>
</dbReference>
<gene>
    <name type="ordered locus">BC_2708</name>
</gene>
<proteinExistence type="inferred from homology"/>
<feature type="chain" id="PRO_0000162368" description="Putative metal-dependent hydrolase BC_2708">
    <location>
        <begin position="1"/>
        <end position="173"/>
    </location>
</feature>
<feature type="binding site" evidence="1">
    <location>
        <position position="65"/>
    </location>
    <ligand>
        <name>Zn(2+)</name>
        <dbReference type="ChEBI" id="CHEBI:29105"/>
    </ligand>
</feature>
<feature type="binding site" evidence="1">
    <location>
        <position position="156"/>
    </location>
    <ligand>
        <name>Zn(2+)</name>
        <dbReference type="ChEBI" id="CHEBI:29105"/>
    </ligand>
</feature>
<feature type="binding site" evidence="1">
    <location>
        <position position="160"/>
    </location>
    <ligand>
        <name>Zn(2+)</name>
        <dbReference type="ChEBI" id="CHEBI:29105"/>
    </ligand>
</feature>
<keyword id="KW-0963">Cytoplasm</keyword>
<keyword id="KW-0378">Hydrolase</keyword>
<keyword id="KW-0479">Metal-binding</keyword>
<keyword id="KW-1185">Reference proteome</keyword>
<keyword id="KW-0862">Zinc</keyword>
<accession>Q813J0</accession>
<evidence type="ECO:0000255" key="1">
    <source>
        <dbReference type="HAMAP-Rule" id="MF_01256"/>
    </source>
</evidence>
<organism>
    <name type="scientific">Bacillus cereus (strain ATCC 14579 / DSM 31 / CCUG 7414 / JCM 2152 / NBRC 15305 / NCIMB 9373 / NCTC 2599 / NRRL B-3711)</name>
    <dbReference type="NCBI Taxonomy" id="226900"/>
    <lineage>
        <taxon>Bacteria</taxon>
        <taxon>Bacillati</taxon>
        <taxon>Bacillota</taxon>
        <taxon>Bacilli</taxon>
        <taxon>Bacillales</taxon>
        <taxon>Bacillaceae</taxon>
        <taxon>Bacillus</taxon>
        <taxon>Bacillus cereus group</taxon>
    </lineage>
</organism>